<protein>
    <recommendedName>
        <fullName evidence="1">6,7-dimethyl-8-ribityllumazine synthase</fullName>
        <shortName evidence="1">DMRL synthase</shortName>
        <shortName evidence="1">LS</shortName>
        <shortName evidence="1">Lumazine synthase</shortName>
        <ecNumber evidence="1">2.5.1.78</ecNumber>
    </recommendedName>
</protein>
<name>RISB_CHLPN</name>
<dbReference type="EC" id="2.5.1.78" evidence="1"/>
<dbReference type="EMBL" id="AE001363">
    <property type="protein sequence ID" value="AAD19011.1"/>
    <property type="molecule type" value="Genomic_DNA"/>
</dbReference>
<dbReference type="EMBL" id="AE002161">
    <property type="protein sequence ID" value="AAF38774.1"/>
    <property type="molecule type" value="Genomic_DNA"/>
</dbReference>
<dbReference type="EMBL" id="BA000008">
    <property type="protein sequence ID" value="BAA99081.1"/>
    <property type="molecule type" value="Genomic_DNA"/>
</dbReference>
<dbReference type="EMBL" id="AE009440">
    <property type="protein sequence ID" value="AAP98831.1"/>
    <property type="status" value="ALT_INIT"/>
    <property type="molecule type" value="Genomic_DNA"/>
</dbReference>
<dbReference type="PIR" id="A72027">
    <property type="entry name" value="A72027"/>
</dbReference>
<dbReference type="PIR" id="G86599">
    <property type="entry name" value="G86599"/>
</dbReference>
<dbReference type="RefSeq" id="NP_225068.1">
    <property type="nucleotide sequence ID" value="NC_000922.1"/>
</dbReference>
<dbReference type="RefSeq" id="WP_010883508.1">
    <property type="nucleotide sequence ID" value="NZ_LN847257.1"/>
</dbReference>
<dbReference type="SMR" id="Q9Z733"/>
<dbReference type="STRING" id="406984.CPK_ORF00280"/>
<dbReference type="GeneID" id="45050926"/>
<dbReference type="KEGG" id="cpa:CP_0996"/>
<dbReference type="KEGG" id="cpj:ribE"/>
<dbReference type="KEGG" id="cpn:CPn_0873"/>
<dbReference type="KEGG" id="cpt:CpB0902"/>
<dbReference type="PATRIC" id="fig|115713.3.peg.953"/>
<dbReference type="eggNOG" id="COG0054">
    <property type="taxonomic scope" value="Bacteria"/>
</dbReference>
<dbReference type="HOGENOM" id="CLU_089358_1_1_0"/>
<dbReference type="OrthoDB" id="9809709at2"/>
<dbReference type="BRENDA" id="2.5.1.78">
    <property type="organism ID" value="1311"/>
</dbReference>
<dbReference type="UniPathway" id="UPA00275">
    <property type="reaction ID" value="UER00404"/>
</dbReference>
<dbReference type="Proteomes" id="UP000000583">
    <property type="component" value="Chromosome"/>
</dbReference>
<dbReference type="Proteomes" id="UP000000801">
    <property type="component" value="Chromosome"/>
</dbReference>
<dbReference type="GO" id="GO:0005829">
    <property type="term" value="C:cytosol"/>
    <property type="evidence" value="ECO:0007669"/>
    <property type="project" value="TreeGrafter"/>
</dbReference>
<dbReference type="GO" id="GO:0009349">
    <property type="term" value="C:riboflavin synthase complex"/>
    <property type="evidence" value="ECO:0007669"/>
    <property type="project" value="InterPro"/>
</dbReference>
<dbReference type="GO" id="GO:0000906">
    <property type="term" value="F:6,7-dimethyl-8-ribityllumazine synthase activity"/>
    <property type="evidence" value="ECO:0007669"/>
    <property type="project" value="UniProtKB-UniRule"/>
</dbReference>
<dbReference type="GO" id="GO:0009231">
    <property type="term" value="P:riboflavin biosynthetic process"/>
    <property type="evidence" value="ECO:0007669"/>
    <property type="project" value="UniProtKB-UniRule"/>
</dbReference>
<dbReference type="CDD" id="cd09209">
    <property type="entry name" value="Lumazine_synthase-I"/>
    <property type="match status" value="1"/>
</dbReference>
<dbReference type="Gene3D" id="3.40.50.960">
    <property type="entry name" value="Lumazine/riboflavin synthase"/>
    <property type="match status" value="1"/>
</dbReference>
<dbReference type="HAMAP" id="MF_00178">
    <property type="entry name" value="Lumazine_synth"/>
    <property type="match status" value="1"/>
</dbReference>
<dbReference type="InterPro" id="IPR034964">
    <property type="entry name" value="LS"/>
</dbReference>
<dbReference type="InterPro" id="IPR002180">
    <property type="entry name" value="LS/RS"/>
</dbReference>
<dbReference type="InterPro" id="IPR036467">
    <property type="entry name" value="LS/RS_sf"/>
</dbReference>
<dbReference type="NCBIfam" id="TIGR00114">
    <property type="entry name" value="lumazine-synth"/>
    <property type="match status" value="1"/>
</dbReference>
<dbReference type="PANTHER" id="PTHR21058:SF0">
    <property type="entry name" value="6,7-DIMETHYL-8-RIBITYLLUMAZINE SYNTHASE"/>
    <property type="match status" value="1"/>
</dbReference>
<dbReference type="PANTHER" id="PTHR21058">
    <property type="entry name" value="6,7-DIMETHYL-8-RIBITYLLUMAZINE SYNTHASE DMRL SYNTHASE LUMAZINE SYNTHASE"/>
    <property type="match status" value="1"/>
</dbReference>
<dbReference type="Pfam" id="PF00885">
    <property type="entry name" value="DMRL_synthase"/>
    <property type="match status" value="1"/>
</dbReference>
<dbReference type="SUPFAM" id="SSF52121">
    <property type="entry name" value="Lumazine synthase"/>
    <property type="match status" value="1"/>
</dbReference>
<comment type="function">
    <text evidence="1">Catalyzes the formation of 6,7-dimethyl-8-ribityllumazine by condensation of 5-amino-6-(D-ribitylamino)uracil with 3,4-dihydroxy-2-butanone 4-phosphate. This is the penultimate step in the biosynthesis of riboflavin.</text>
</comment>
<comment type="catalytic activity">
    <reaction evidence="1">
        <text>(2S)-2-hydroxy-3-oxobutyl phosphate + 5-amino-6-(D-ribitylamino)uracil = 6,7-dimethyl-8-(1-D-ribityl)lumazine + phosphate + 2 H2O + H(+)</text>
        <dbReference type="Rhea" id="RHEA:26152"/>
        <dbReference type="ChEBI" id="CHEBI:15377"/>
        <dbReference type="ChEBI" id="CHEBI:15378"/>
        <dbReference type="ChEBI" id="CHEBI:15934"/>
        <dbReference type="ChEBI" id="CHEBI:43474"/>
        <dbReference type="ChEBI" id="CHEBI:58201"/>
        <dbReference type="ChEBI" id="CHEBI:58830"/>
        <dbReference type="EC" id="2.5.1.78"/>
    </reaction>
</comment>
<comment type="pathway">
    <text evidence="1">Cofactor biosynthesis; riboflavin biosynthesis; riboflavin from 2-hydroxy-3-oxobutyl phosphate and 5-amino-6-(D-ribitylamino)uracil: step 1/2.</text>
</comment>
<comment type="similarity">
    <text evidence="1">Belongs to the DMRL synthase family.</text>
</comment>
<comment type="sequence caution" evidence="2">
    <conflict type="erroneous initiation">
        <sequence resource="EMBL-CDS" id="AAP98831"/>
    </conflict>
</comment>
<evidence type="ECO:0000255" key="1">
    <source>
        <dbReference type="HAMAP-Rule" id="MF_00178"/>
    </source>
</evidence>
<evidence type="ECO:0000305" key="2"/>
<feature type="chain" id="PRO_0000134739" description="6,7-dimethyl-8-ribityllumazine synthase">
    <location>
        <begin position="1"/>
        <end position="154"/>
    </location>
</feature>
<feature type="active site" description="Proton donor" evidence="1">
    <location>
        <position position="89"/>
    </location>
</feature>
<feature type="binding site" evidence="1">
    <location>
        <position position="22"/>
    </location>
    <ligand>
        <name>5-amino-6-(D-ribitylamino)uracil</name>
        <dbReference type="ChEBI" id="CHEBI:15934"/>
    </ligand>
</feature>
<feature type="binding site" evidence="1">
    <location>
        <begin position="56"/>
        <end position="58"/>
    </location>
    <ligand>
        <name>5-amino-6-(D-ribitylamino)uracil</name>
        <dbReference type="ChEBI" id="CHEBI:15934"/>
    </ligand>
</feature>
<feature type="binding site" evidence="1">
    <location>
        <begin position="81"/>
        <end position="83"/>
    </location>
    <ligand>
        <name>5-amino-6-(D-ribitylamino)uracil</name>
        <dbReference type="ChEBI" id="CHEBI:15934"/>
    </ligand>
</feature>
<feature type="binding site" evidence="1">
    <location>
        <begin position="86"/>
        <end position="87"/>
    </location>
    <ligand>
        <name>(2S)-2-hydroxy-3-oxobutyl phosphate</name>
        <dbReference type="ChEBI" id="CHEBI:58830"/>
    </ligand>
</feature>
<feature type="binding site" evidence="1">
    <location>
        <position position="114"/>
    </location>
    <ligand>
        <name>5-amino-6-(D-ribitylamino)uracil</name>
        <dbReference type="ChEBI" id="CHEBI:15934"/>
    </ligand>
</feature>
<feature type="binding site" evidence="1">
    <location>
        <position position="128"/>
    </location>
    <ligand>
        <name>(2S)-2-hydroxy-3-oxobutyl phosphate</name>
        <dbReference type="ChEBI" id="CHEBI:58830"/>
    </ligand>
</feature>
<reference key="1">
    <citation type="journal article" date="1999" name="Nat. Genet.">
        <title>Comparative genomes of Chlamydia pneumoniae and C. trachomatis.</title>
        <authorList>
            <person name="Kalman S."/>
            <person name="Mitchell W.P."/>
            <person name="Marathe R."/>
            <person name="Lammel C.J."/>
            <person name="Fan J."/>
            <person name="Hyman R.W."/>
            <person name="Olinger L."/>
            <person name="Grimwood J."/>
            <person name="Davis R.W."/>
            <person name="Stephens R.S."/>
        </authorList>
    </citation>
    <scope>NUCLEOTIDE SEQUENCE [LARGE SCALE GENOMIC DNA]</scope>
    <source>
        <strain>CWL029</strain>
    </source>
</reference>
<reference key="2">
    <citation type="journal article" date="2000" name="Nucleic Acids Res.">
        <title>Genome sequences of Chlamydia trachomatis MoPn and Chlamydia pneumoniae AR39.</title>
        <authorList>
            <person name="Read T.D."/>
            <person name="Brunham R.C."/>
            <person name="Shen C."/>
            <person name="Gill S.R."/>
            <person name="Heidelberg J.F."/>
            <person name="White O."/>
            <person name="Hickey E.K."/>
            <person name="Peterson J.D."/>
            <person name="Utterback T.R."/>
            <person name="Berry K.J."/>
            <person name="Bass S."/>
            <person name="Linher K.D."/>
            <person name="Weidman J.F."/>
            <person name="Khouri H.M."/>
            <person name="Craven B."/>
            <person name="Bowman C."/>
            <person name="Dodson R.J."/>
            <person name="Gwinn M.L."/>
            <person name="Nelson W.C."/>
            <person name="DeBoy R.T."/>
            <person name="Kolonay J.F."/>
            <person name="McClarty G."/>
            <person name="Salzberg S.L."/>
            <person name="Eisen J.A."/>
            <person name="Fraser C.M."/>
        </authorList>
    </citation>
    <scope>NUCLEOTIDE SEQUENCE [LARGE SCALE GENOMIC DNA]</scope>
    <source>
        <strain>AR39</strain>
    </source>
</reference>
<reference key="3">
    <citation type="journal article" date="2000" name="Nucleic Acids Res.">
        <title>Comparison of whole genome sequences of Chlamydia pneumoniae J138 from Japan and CWL029 from USA.</title>
        <authorList>
            <person name="Shirai M."/>
            <person name="Hirakawa H."/>
            <person name="Kimoto M."/>
            <person name="Tabuchi M."/>
            <person name="Kishi F."/>
            <person name="Ouchi K."/>
            <person name="Shiba T."/>
            <person name="Ishii K."/>
            <person name="Hattori M."/>
            <person name="Kuhara S."/>
            <person name="Nakazawa T."/>
        </authorList>
    </citation>
    <scope>NUCLEOTIDE SEQUENCE [LARGE SCALE GENOMIC DNA]</scope>
    <source>
        <strain>J138</strain>
    </source>
</reference>
<reference key="4">
    <citation type="submission" date="2002-05" db="EMBL/GenBank/DDBJ databases">
        <title>The genome sequence of Chlamydia pneumoniae TW183 and comparison with other Chlamydia strains based on whole genome sequence analysis.</title>
        <authorList>
            <person name="Geng M.M."/>
            <person name="Schuhmacher A."/>
            <person name="Muehldorfer I."/>
            <person name="Bensch K.W."/>
            <person name="Schaefer K.P."/>
            <person name="Schneider S."/>
            <person name="Pohl T."/>
            <person name="Essig A."/>
            <person name="Marre R."/>
            <person name="Melchers K."/>
        </authorList>
    </citation>
    <scope>NUCLEOTIDE SEQUENCE [LARGE SCALE GENOMIC DNA]</scope>
    <source>
        <strain>TW-183</strain>
    </source>
</reference>
<gene>
    <name evidence="1" type="primary">ribH</name>
    <name type="synonym">ribE</name>
    <name type="ordered locus">CPn_0873</name>
    <name type="ordered locus">CP_0996</name>
    <name type="ordered locus">CpB0902</name>
</gene>
<sequence>MKTLKGHLSAKNLRIAIVGSCFNQAMADALVSGTQETFLKFGGSEDGLMTIRVPGAFEIPCTIKKLLSSERKFDAIVACGVLIQGETDHYNQIVNQVAAGIGALSLEFCLPITLSIVAAPSAEIAWQRSGIKGRHLGVSGMTTAIEMATLFTQI</sequence>
<accession>Q9Z733</accession>
<accession>Q9JQ56</accession>
<organism>
    <name type="scientific">Chlamydia pneumoniae</name>
    <name type="common">Chlamydophila pneumoniae</name>
    <dbReference type="NCBI Taxonomy" id="83558"/>
    <lineage>
        <taxon>Bacteria</taxon>
        <taxon>Pseudomonadati</taxon>
        <taxon>Chlamydiota</taxon>
        <taxon>Chlamydiia</taxon>
        <taxon>Chlamydiales</taxon>
        <taxon>Chlamydiaceae</taxon>
        <taxon>Chlamydia/Chlamydophila group</taxon>
        <taxon>Chlamydia</taxon>
    </lineage>
</organism>
<proteinExistence type="inferred from homology"/>
<keyword id="KW-0686">Riboflavin biosynthesis</keyword>
<keyword id="KW-0808">Transferase</keyword>